<organism>
    <name type="scientific">Haemophilus ducreyi (strain 35000HP / ATCC 700724)</name>
    <dbReference type="NCBI Taxonomy" id="233412"/>
    <lineage>
        <taxon>Bacteria</taxon>
        <taxon>Pseudomonadati</taxon>
        <taxon>Pseudomonadota</taxon>
        <taxon>Gammaproteobacteria</taxon>
        <taxon>Pasteurellales</taxon>
        <taxon>Pasteurellaceae</taxon>
        <taxon>Haemophilus</taxon>
    </lineage>
</organism>
<feature type="chain" id="PRO_0000209475" description="Fe/S biogenesis protein NfuA">
    <location>
        <begin position="1"/>
        <end position="199"/>
    </location>
</feature>
<feature type="binding site" evidence="1">
    <location>
        <position position="156"/>
    </location>
    <ligand>
        <name>[4Fe-4S] cluster</name>
        <dbReference type="ChEBI" id="CHEBI:49883"/>
    </ligand>
</feature>
<feature type="binding site" evidence="1">
    <location>
        <position position="159"/>
    </location>
    <ligand>
        <name>[4Fe-4S] cluster</name>
        <dbReference type="ChEBI" id="CHEBI:49883"/>
    </ligand>
</feature>
<evidence type="ECO:0000255" key="1">
    <source>
        <dbReference type="HAMAP-Rule" id="MF_01637"/>
    </source>
</evidence>
<proteinExistence type="inferred from homology"/>
<reference key="1">
    <citation type="submission" date="2003-06" db="EMBL/GenBank/DDBJ databases">
        <title>The complete genome sequence of Haemophilus ducreyi.</title>
        <authorList>
            <person name="Munson R.S. Jr."/>
            <person name="Ray W.C."/>
            <person name="Mahairas G."/>
            <person name="Sabo P."/>
            <person name="Mungur R."/>
            <person name="Johnson L."/>
            <person name="Nguyen D."/>
            <person name="Wang J."/>
            <person name="Forst C."/>
            <person name="Hood L."/>
        </authorList>
    </citation>
    <scope>NUCLEOTIDE SEQUENCE [LARGE SCALE GENOMIC DNA]</scope>
    <source>
        <strain>35000HP / ATCC 700724</strain>
    </source>
</reference>
<keyword id="KW-0004">4Fe-4S</keyword>
<keyword id="KW-0408">Iron</keyword>
<keyword id="KW-0411">Iron-sulfur</keyword>
<keyword id="KW-0479">Metal-binding</keyword>
<keyword id="KW-1185">Reference proteome</keyword>
<sequence length="199" mass="22076">MEQQEIIHISISEAAQAHFRCLLEQQEPNTHIRIFVVNPGTPSAECGVSYCPSNAVEETDTEFKFTGFSAFVDELSLPFLADAEIDYVTDQMGAQLTLKAPNSKMRKIADDAPFIERLDYVIQTQVNPQLASHGGQVTLIEVTEDKYAILQFGGGCNGCSMVDVTLKEGIEKQLLATFPTELKGVKDVTEHQRGEHSYY</sequence>
<protein>
    <recommendedName>
        <fullName evidence="1">Fe/S biogenesis protein NfuA</fullName>
    </recommendedName>
</protein>
<name>NFUA_HAEDU</name>
<gene>
    <name evidence="1" type="primary">nfuA</name>
    <name type="ordered locus">HD_0378</name>
</gene>
<accession>Q7VNV0</accession>
<comment type="function">
    <text evidence="1">Involved in iron-sulfur cluster biogenesis. Binds a 4Fe-4S cluster, can transfer this cluster to apoproteins, and thereby intervenes in the maturation of Fe/S proteins. Could also act as a scaffold/chaperone for damaged Fe/S proteins.</text>
</comment>
<comment type="cofactor">
    <cofactor evidence="1">
        <name>[4Fe-4S] cluster</name>
        <dbReference type="ChEBI" id="CHEBI:49883"/>
    </cofactor>
    <text evidence="1">Binds 1 [4Fe-4S] cluster per subunit. The cluster is presumably bound at the interface of two monomers.</text>
</comment>
<comment type="subunit">
    <text evidence="1">Homodimer.</text>
</comment>
<comment type="similarity">
    <text evidence="1">Belongs to the NfuA family.</text>
</comment>
<dbReference type="EMBL" id="AE017143">
    <property type="protein sequence ID" value="AAP95348.1"/>
    <property type="molecule type" value="Genomic_DNA"/>
</dbReference>
<dbReference type="RefSeq" id="WP_010944401.1">
    <property type="nucleotide sequence ID" value="NC_002940.2"/>
</dbReference>
<dbReference type="SMR" id="Q7VNV0"/>
<dbReference type="STRING" id="233412.HD_0378"/>
<dbReference type="GeneID" id="60733718"/>
<dbReference type="KEGG" id="hdu:HD_0378"/>
<dbReference type="eggNOG" id="COG0316">
    <property type="taxonomic scope" value="Bacteria"/>
</dbReference>
<dbReference type="eggNOG" id="COG0694">
    <property type="taxonomic scope" value="Bacteria"/>
</dbReference>
<dbReference type="HOGENOM" id="CLU_094569_0_0_6"/>
<dbReference type="OrthoDB" id="9785450at2"/>
<dbReference type="Proteomes" id="UP000001022">
    <property type="component" value="Chromosome"/>
</dbReference>
<dbReference type="GO" id="GO:0051539">
    <property type="term" value="F:4 iron, 4 sulfur cluster binding"/>
    <property type="evidence" value="ECO:0007669"/>
    <property type="project" value="UniProtKB-UniRule"/>
</dbReference>
<dbReference type="GO" id="GO:0005506">
    <property type="term" value="F:iron ion binding"/>
    <property type="evidence" value="ECO:0007669"/>
    <property type="project" value="InterPro"/>
</dbReference>
<dbReference type="GO" id="GO:0016226">
    <property type="term" value="P:iron-sulfur cluster assembly"/>
    <property type="evidence" value="ECO:0007669"/>
    <property type="project" value="UniProtKB-UniRule"/>
</dbReference>
<dbReference type="GO" id="GO:0051604">
    <property type="term" value="P:protein maturation"/>
    <property type="evidence" value="ECO:0007669"/>
    <property type="project" value="UniProtKB-UniRule"/>
</dbReference>
<dbReference type="Gene3D" id="3.30.300.130">
    <property type="entry name" value="Fe-S cluster assembly (FSCA)"/>
    <property type="match status" value="1"/>
</dbReference>
<dbReference type="Gene3D" id="2.60.300.12">
    <property type="entry name" value="HesB-like domain"/>
    <property type="match status" value="1"/>
</dbReference>
<dbReference type="HAMAP" id="MF_01637">
    <property type="entry name" value="Fe_S_biogen_NfuA"/>
    <property type="match status" value="1"/>
</dbReference>
<dbReference type="InterPro" id="IPR017726">
    <property type="entry name" value="Fe/S_biogenesis_protein_NfuA"/>
</dbReference>
<dbReference type="InterPro" id="IPR000361">
    <property type="entry name" value="FeS_biogenesis"/>
</dbReference>
<dbReference type="InterPro" id="IPR034904">
    <property type="entry name" value="FSCA_dom_sf"/>
</dbReference>
<dbReference type="InterPro" id="IPR035903">
    <property type="entry name" value="HesB-like_dom_sf"/>
</dbReference>
<dbReference type="InterPro" id="IPR001075">
    <property type="entry name" value="NIF_FeS_clus_asmbl_NifU_C"/>
</dbReference>
<dbReference type="NCBIfam" id="NF008392">
    <property type="entry name" value="PRK11190.1"/>
    <property type="match status" value="1"/>
</dbReference>
<dbReference type="NCBIfam" id="TIGR03341">
    <property type="entry name" value="YhgI_GntY"/>
    <property type="match status" value="1"/>
</dbReference>
<dbReference type="PANTHER" id="PTHR11178:SF51">
    <property type="entry name" value="FE_S BIOGENESIS PROTEIN NFUA"/>
    <property type="match status" value="1"/>
</dbReference>
<dbReference type="PANTHER" id="PTHR11178">
    <property type="entry name" value="IRON-SULFUR CLUSTER SCAFFOLD PROTEIN NFU-RELATED"/>
    <property type="match status" value="1"/>
</dbReference>
<dbReference type="Pfam" id="PF01521">
    <property type="entry name" value="Fe-S_biosyn"/>
    <property type="match status" value="1"/>
</dbReference>
<dbReference type="Pfam" id="PF01106">
    <property type="entry name" value="NifU"/>
    <property type="match status" value="1"/>
</dbReference>
<dbReference type="SUPFAM" id="SSF117916">
    <property type="entry name" value="Fe-S cluster assembly (FSCA) domain-like"/>
    <property type="match status" value="1"/>
</dbReference>
<dbReference type="SUPFAM" id="SSF89360">
    <property type="entry name" value="HesB-like domain"/>
    <property type="match status" value="1"/>
</dbReference>